<reference key="1">
    <citation type="journal article" date="2006" name="Nature">
        <title>Analysis of the DNA sequence and duplication history of human chromosome 15.</title>
        <authorList>
            <person name="Zody M.C."/>
            <person name="Garber M."/>
            <person name="Sharpe T."/>
            <person name="Young S.K."/>
            <person name="Rowen L."/>
            <person name="O'Neill K."/>
            <person name="Whittaker C.A."/>
            <person name="Kamal M."/>
            <person name="Chang J.L."/>
            <person name="Cuomo C.A."/>
            <person name="Dewar K."/>
            <person name="FitzGerald M.G."/>
            <person name="Kodira C.D."/>
            <person name="Madan A."/>
            <person name="Qin S."/>
            <person name="Yang X."/>
            <person name="Abbasi N."/>
            <person name="Abouelleil A."/>
            <person name="Arachchi H.M."/>
            <person name="Baradarani L."/>
            <person name="Birditt B."/>
            <person name="Bloom S."/>
            <person name="Bloom T."/>
            <person name="Borowsky M.L."/>
            <person name="Burke J."/>
            <person name="Butler J."/>
            <person name="Cook A."/>
            <person name="DeArellano K."/>
            <person name="DeCaprio D."/>
            <person name="Dorris L. III"/>
            <person name="Dors M."/>
            <person name="Eichler E.E."/>
            <person name="Engels R."/>
            <person name="Fahey J."/>
            <person name="Fleetwood P."/>
            <person name="Friedman C."/>
            <person name="Gearin G."/>
            <person name="Hall J.L."/>
            <person name="Hensley G."/>
            <person name="Johnson E."/>
            <person name="Jones C."/>
            <person name="Kamat A."/>
            <person name="Kaur A."/>
            <person name="Locke D.P."/>
            <person name="Madan A."/>
            <person name="Munson G."/>
            <person name="Jaffe D.B."/>
            <person name="Lui A."/>
            <person name="Macdonald P."/>
            <person name="Mauceli E."/>
            <person name="Naylor J.W."/>
            <person name="Nesbitt R."/>
            <person name="Nicol R."/>
            <person name="O'Leary S.B."/>
            <person name="Ratcliffe A."/>
            <person name="Rounsley S."/>
            <person name="She X."/>
            <person name="Sneddon K.M.B."/>
            <person name="Stewart S."/>
            <person name="Sougnez C."/>
            <person name="Stone S.M."/>
            <person name="Topham K."/>
            <person name="Vincent D."/>
            <person name="Wang S."/>
            <person name="Zimmer A.R."/>
            <person name="Birren B.W."/>
            <person name="Hood L."/>
            <person name="Lander E.S."/>
            <person name="Nusbaum C."/>
        </authorList>
    </citation>
    <scope>NUCLEOTIDE SEQUENCE [LARGE SCALE GENOMIC DNA]</scope>
</reference>
<keyword id="KW-1267">Proteomics identification</keyword>
<keyword id="KW-1185">Reference proteome</keyword>
<keyword id="KW-0727">SH2 domain</keyword>
<name>SH2D7_HUMAN</name>
<gene>
    <name type="primary">SH2D7</name>
</gene>
<protein>
    <recommendedName>
        <fullName>SH2 domain-containing protein 7</fullName>
    </recommendedName>
</protein>
<organism>
    <name type="scientific">Homo sapiens</name>
    <name type="common">Human</name>
    <dbReference type="NCBI Taxonomy" id="9606"/>
    <lineage>
        <taxon>Eukaryota</taxon>
        <taxon>Metazoa</taxon>
        <taxon>Chordata</taxon>
        <taxon>Craniata</taxon>
        <taxon>Vertebrata</taxon>
        <taxon>Euteleostomi</taxon>
        <taxon>Mammalia</taxon>
        <taxon>Eutheria</taxon>
        <taxon>Euarchontoglires</taxon>
        <taxon>Primates</taxon>
        <taxon>Haplorrhini</taxon>
        <taxon>Catarrhini</taxon>
        <taxon>Hominidae</taxon>
        <taxon>Homo</taxon>
    </lineage>
</organism>
<accession>A6NKC9</accession>
<feature type="chain" id="PRO_0000341254" description="SH2 domain-containing protein 7">
    <location>
        <begin position="1"/>
        <end position="451"/>
    </location>
</feature>
<feature type="domain" description="SH2" evidence="1">
    <location>
        <begin position="51"/>
        <end position="142"/>
    </location>
</feature>
<feature type="region of interest" description="Disordered" evidence="2">
    <location>
        <begin position="180"/>
        <end position="232"/>
    </location>
</feature>
<feature type="region of interest" description="Disordered" evidence="2">
    <location>
        <begin position="256"/>
        <end position="321"/>
    </location>
</feature>
<feature type="region of interest" description="Disordered" evidence="2">
    <location>
        <begin position="408"/>
        <end position="436"/>
    </location>
</feature>
<feature type="compositionally biased region" description="Low complexity" evidence="2">
    <location>
        <begin position="221"/>
        <end position="232"/>
    </location>
</feature>
<feature type="compositionally biased region" description="Basic and acidic residues" evidence="2">
    <location>
        <begin position="279"/>
        <end position="291"/>
    </location>
</feature>
<feature type="compositionally biased region" description="Polar residues" evidence="2">
    <location>
        <begin position="306"/>
        <end position="316"/>
    </location>
</feature>
<feature type="compositionally biased region" description="Basic and acidic residues" evidence="2">
    <location>
        <begin position="426"/>
        <end position="436"/>
    </location>
</feature>
<feature type="sequence variant" id="VAR_060127" description="In dbSNP:rs2289524.">
    <original>M</original>
    <variation>T</variation>
    <location>
        <position position="137"/>
    </location>
</feature>
<feature type="sequence variant" id="VAR_060128" description="In dbSNP:rs12593575.">
    <original>R</original>
    <variation>W</variation>
    <location>
        <position position="206"/>
    </location>
</feature>
<dbReference type="EMBL" id="AC090260">
    <property type="status" value="NOT_ANNOTATED_CDS"/>
    <property type="molecule type" value="Genomic_DNA"/>
</dbReference>
<dbReference type="CCDS" id="CCDS45315.1"/>
<dbReference type="RefSeq" id="NP_001094874.1">
    <property type="nucleotide sequence ID" value="NM_001101404.2"/>
</dbReference>
<dbReference type="FunCoup" id="A6NKC9">
    <property type="interactions" value="480"/>
</dbReference>
<dbReference type="STRING" id="9606.ENSP00000327846"/>
<dbReference type="GlyGen" id="A6NKC9">
    <property type="glycosylation" value="1 site, 1 O-linked glycan (1 site)"/>
</dbReference>
<dbReference type="iPTMnet" id="A6NKC9"/>
<dbReference type="PhosphoSitePlus" id="A6NKC9"/>
<dbReference type="BioMuta" id="SH2D7"/>
<dbReference type="jPOST" id="A6NKC9"/>
<dbReference type="MassIVE" id="A6NKC9"/>
<dbReference type="PaxDb" id="9606-ENSP00000327846"/>
<dbReference type="PeptideAtlas" id="A6NKC9"/>
<dbReference type="ProteomicsDB" id="1401"/>
<dbReference type="Antibodypedia" id="62529">
    <property type="antibodies" value="9 antibodies from 5 providers"/>
</dbReference>
<dbReference type="DNASU" id="646892"/>
<dbReference type="Ensembl" id="ENST00000328828.6">
    <property type="protein sequence ID" value="ENSP00000327846.5"/>
    <property type="gene ID" value="ENSG00000183476.13"/>
</dbReference>
<dbReference type="GeneID" id="646892"/>
<dbReference type="KEGG" id="hsa:646892"/>
<dbReference type="MANE-Select" id="ENST00000328828.6">
    <property type="protein sequence ID" value="ENSP00000327846.5"/>
    <property type="RefSeq nucleotide sequence ID" value="NM_001101404.2"/>
    <property type="RefSeq protein sequence ID" value="NP_001094874.1"/>
</dbReference>
<dbReference type="UCSC" id="uc010blb.2">
    <property type="organism name" value="human"/>
</dbReference>
<dbReference type="AGR" id="HGNC:34549"/>
<dbReference type="CTD" id="646892"/>
<dbReference type="DisGeNET" id="646892"/>
<dbReference type="GeneCards" id="SH2D7"/>
<dbReference type="HGNC" id="HGNC:34549">
    <property type="gene designation" value="SH2D7"/>
</dbReference>
<dbReference type="HPA" id="ENSG00000183476">
    <property type="expression patterns" value="Group enriched (intestine, testis)"/>
</dbReference>
<dbReference type="neXtProt" id="NX_A6NKC9"/>
<dbReference type="OpenTargets" id="ENSG00000183476"/>
<dbReference type="PharmGKB" id="PA164725681"/>
<dbReference type="VEuPathDB" id="HostDB:ENSG00000183476"/>
<dbReference type="eggNOG" id="ENOG502QUGN">
    <property type="taxonomic scope" value="Eukaryota"/>
</dbReference>
<dbReference type="GeneTree" id="ENSGT00940000160977"/>
<dbReference type="HOGENOM" id="CLU_045989_0_0_1"/>
<dbReference type="InParanoid" id="A6NKC9"/>
<dbReference type="OMA" id="RWFMETQ"/>
<dbReference type="OrthoDB" id="6108017at2759"/>
<dbReference type="PAN-GO" id="A6NKC9">
    <property type="GO annotations" value="0 GO annotations based on evolutionary models"/>
</dbReference>
<dbReference type="PhylomeDB" id="A6NKC9"/>
<dbReference type="TreeFam" id="TF337522"/>
<dbReference type="PathwayCommons" id="A6NKC9"/>
<dbReference type="SignaLink" id="A6NKC9"/>
<dbReference type="BioGRID-ORCS" id="646892">
    <property type="hits" value="9 hits in 1144 CRISPR screens"/>
</dbReference>
<dbReference type="ChiTaRS" id="SH2D7">
    <property type="organism name" value="human"/>
</dbReference>
<dbReference type="GenomeRNAi" id="646892"/>
<dbReference type="Pharos" id="A6NKC9">
    <property type="development level" value="Tdark"/>
</dbReference>
<dbReference type="PRO" id="PR:A6NKC9"/>
<dbReference type="Proteomes" id="UP000005640">
    <property type="component" value="Chromosome 15"/>
</dbReference>
<dbReference type="RNAct" id="A6NKC9">
    <property type="molecule type" value="protein"/>
</dbReference>
<dbReference type="Bgee" id="ENSG00000183476">
    <property type="expression patterns" value="Expressed in male germ line stem cell (sensu Vertebrata) in testis and 67 other cell types or tissues"/>
</dbReference>
<dbReference type="ExpressionAtlas" id="A6NKC9">
    <property type="expression patterns" value="baseline and differential"/>
</dbReference>
<dbReference type="GO" id="GO:0005737">
    <property type="term" value="C:cytoplasm"/>
    <property type="evidence" value="ECO:0000318"/>
    <property type="project" value="GO_Central"/>
</dbReference>
<dbReference type="CDD" id="cd10417">
    <property type="entry name" value="SH2_SH2D7"/>
    <property type="match status" value="1"/>
</dbReference>
<dbReference type="FunFam" id="3.30.505.10:FF:000059">
    <property type="entry name" value="hematopoietic SH2 domain-containing protein"/>
    <property type="match status" value="1"/>
</dbReference>
<dbReference type="Gene3D" id="3.30.505.10">
    <property type="entry name" value="SH2 domain"/>
    <property type="match status" value="1"/>
</dbReference>
<dbReference type="InterPro" id="IPR000980">
    <property type="entry name" value="SH2"/>
</dbReference>
<dbReference type="InterPro" id="IPR036860">
    <property type="entry name" value="SH2_dom_sf"/>
</dbReference>
<dbReference type="InterPro" id="IPR035885">
    <property type="entry name" value="SH2D7_SH2"/>
</dbReference>
<dbReference type="PANTHER" id="PTHR14388:SF6">
    <property type="entry name" value="SH2 DOMAIN-CONTAINING PROTEIN 7"/>
    <property type="match status" value="1"/>
</dbReference>
<dbReference type="PANTHER" id="PTHR14388">
    <property type="entry name" value="T CELL-SPECIFIC ADAPTER PROTEIN TSAD"/>
    <property type="match status" value="1"/>
</dbReference>
<dbReference type="Pfam" id="PF00017">
    <property type="entry name" value="SH2"/>
    <property type="match status" value="1"/>
</dbReference>
<dbReference type="PRINTS" id="PR00401">
    <property type="entry name" value="SH2DOMAIN"/>
</dbReference>
<dbReference type="SMART" id="SM00252">
    <property type="entry name" value="SH2"/>
    <property type="match status" value="1"/>
</dbReference>
<dbReference type="SUPFAM" id="SSF55550">
    <property type="entry name" value="SH2 domain"/>
    <property type="match status" value="1"/>
</dbReference>
<dbReference type="PROSITE" id="PS50001">
    <property type="entry name" value="SH2"/>
    <property type="match status" value="1"/>
</dbReference>
<proteinExistence type="evidence at protein level"/>
<evidence type="ECO:0000255" key="1">
    <source>
        <dbReference type="PROSITE-ProRule" id="PRU00191"/>
    </source>
</evidence>
<evidence type="ECO:0000256" key="2">
    <source>
        <dbReference type="SAM" id="MobiDB-lite"/>
    </source>
</evidence>
<sequence length="451" mass="49807">MEDSLKQLSLGRDPEGAGDSQALAELQELALKWFMETQAPFILQNGALPPWFHGFITRKQTEQLLRDKALGSFLIRLSDRATGYILSYRGSDRCRHFVINQLRNRRYIISGDTQSHSTLAELVHHYQEAQLEPFKEMLTAACPRPEDNDLYDAITRGLHQTIVDPENPPATAFLTVVPDKAASPRSSPKPQVSFLHAQKSLDVSPRNLSQEESMEAPIRVSPLPEKSSSLLEESFGGPSDIIYADLRRMNQARLGLGTEGSGRHGPVPAGSQAYSPGREAQRRLSDGEQNRPDGLGPVLSGVSPDQGPTESPTSWGCSDAMGSLGATWRQEFPKLSQEAQPCSQGSSADIYEFIGTEGLLQEARDTPDQEGSTYEQIPACWGGPARAPHPGASPTYSPWVHGYKRISGTPELSEPGNTYEQIPATKSKETGRTHKPDKLRRLFFTYRKHKF</sequence>